<proteinExistence type="evidence at transcript level"/>
<feature type="chain" id="PRO_0000292218" description="Dual specificity protein phosphatase 26">
    <location>
        <begin position="1"/>
        <end position="211"/>
    </location>
</feature>
<feature type="domain" description="Tyrosine-protein phosphatase" evidence="2">
    <location>
        <begin position="60"/>
        <end position="207"/>
    </location>
</feature>
<feature type="active site" description="Phosphocysteine intermediate" evidence="2">
    <location>
        <position position="152"/>
    </location>
</feature>
<name>DUS26_BOVIN</name>
<gene>
    <name type="primary">DUSP26</name>
</gene>
<reference key="1">
    <citation type="submission" date="2006-06" db="EMBL/GenBank/DDBJ databases">
        <authorList>
            <consortium name="NIH - Mammalian Gene Collection (MGC) project"/>
        </authorList>
    </citation>
    <scope>NUCLEOTIDE SEQUENCE [LARGE SCALE MRNA]</scope>
    <source>
        <strain>Hereford</strain>
        <tissue>Brain cortex</tissue>
    </source>
</reference>
<sequence>MCPGNWLWASVTFMARFSRSGSRSPVRVRGALEEPPAVQHPFLNVFELERLLYTGKTACNHADEVWPGLYLGDQEIANNHRELRRLGITHVLNASHSRWRGTPEAYEGLGIRYLGVEAHDSPAFDMSVHFQAAADFIHRALSQPGGRILVHCAVGVSRSATLVLAYLMLYHRLTLVEAIKKVKDHRGIIPNRGFLRQLLALDRRLRQGLEA</sequence>
<protein>
    <recommendedName>
        <fullName>Dual specificity protein phosphatase 26</fullName>
        <ecNumber>3.1.3.16</ecNumber>
        <ecNumber>3.1.3.48</ecNumber>
    </recommendedName>
</protein>
<comment type="function">
    <text evidence="1">Inactivates MAPK1 and MAPK3 which leads to dephosphorylation of heat shock factor protein 4 and a reduction in its DNA-binding activity.</text>
</comment>
<comment type="catalytic activity">
    <reaction evidence="3">
        <text>O-phospho-L-tyrosyl-[protein] + H2O = L-tyrosyl-[protein] + phosphate</text>
        <dbReference type="Rhea" id="RHEA:10684"/>
        <dbReference type="Rhea" id="RHEA-COMP:10136"/>
        <dbReference type="Rhea" id="RHEA-COMP:20101"/>
        <dbReference type="ChEBI" id="CHEBI:15377"/>
        <dbReference type="ChEBI" id="CHEBI:43474"/>
        <dbReference type="ChEBI" id="CHEBI:46858"/>
        <dbReference type="ChEBI" id="CHEBI:61978"/>
        <dbReference type="EC" id="3.1.3.48"/>
    </reaction>
</comment>
<comment type="catalytic activity">
    <reaction>
        <text>O-phospho-L-seryl-[protein] + H2O = L-seryl-[protein] + phosphate</text>
        <dbReference type="Rhea" id="RHEA:20629"/>
        <dbReference type="Rhea" id="RHEA-COMP:9863"/>
        <dbReference type="Rhea" id="RHEA-COMP:11604"/>
        <dbReference type="ChEBI" id="CHEBI:15377"/>
        <dbReference type="ChEBI" id="CHEBI:29999"/>
        <dbReference type="ChEBI" id="CHEBI:43474"/>
        <dbReference type="ChEBI" id="CHEBI:83421"/>
        <dbReference type="EC" id="3.1.3.16"/>
    </reaction>
</comment>
<comment type="catalytic activity">
    <reaction>
        <text>O-phospho-L-threonyl-[protein] + H2O = L-threonyl-[protein] + phosphate</text>
        <dbReference type="Rhea" id="RHEA:47004"/>
        <dbReference type="Rhea" id="RHEA-COMP:11060"/>
        <dbReference type="Rhea" id="RHEA-COMP:11605"/>
        <dbReference type="ChEBI" id="CHEBI:15377"/>
        <dbReference type="ChEBI" id="CHEBI:30013"/>
        <dbReference type="ChEBI" id="CHEBI:43474"/>
        <dbReference type="ChEBI" id="CHEBI:61977"/>
        <dbReference type="EC" id="3.1.3.16"/>
    </reaction>
</comment>
<comment type="subunit">
    <text evidence="1">Interacts with HSF4.</text>
</comment>
<comment type="subcellular location">
    <subcellularLocation>
        <location evidence="1">Cytoplasm</location>
    </subcellularLocation>
    <subcellularLocation>
        <location evidence="1">Nucleus</location>
    </subcellularLocation>
    <subcellularLocation>
        <location evidence="1">Golgi apparatus</location>
    </subcellularLocation>
</comment>
<comment type="similarity">
    <text evidence="4">Belongs to the protein-tyrosine phosphatase family. Non-receptor class dual specificity subfamily.</text>
</comment>
<dbReference type="EC" id="3.1.3.16"/>
<dbReference type="EC" id="3.1.3.48"/>
<dbReference type="EMBL" id="BC118329">
    <property type="protein sequence ID" value="AAI18330.1"/>
    <property type="molecule type" value="mRNA"/>
</dbReference>
<dbReference type="RefSeq" id="NP_001069472.1">
    <property type="nucleotide sequence ID" value="NM_001076004.1"/>
</dbReference>
<dbReference type="RefSeq" id="XP_010818620.1">
    <property type="nucleotide sequence ID" value="XM_010820318.4"/>
</dbReference>
<dbReference type="SMR" id="Q17QJ3"/>
<dbReference type="FunCoup" id="Q17QJ3">
    <property type="interactions" value="560"/>
</dbReference>
<dbReference type="STRING" id="9913.ENSBTAP00000065349"/>
<dbReference type="PaxDb" id="9913-ENSBTAP00000021830"/>
<dbReference type="GeneID" id="533896"/>
<dbReference type="KEGG" id="bta:533896"/>
<dbReference type="CTD" id="78986"/>
<dbReference type="VEuPathDB" id="HostDB:ENSBTAG00000016413"/>
<dbReference type="eggNOG" id="KOG1716">
    <property type="taxonomic scope" value="Eukaryota"/>
</dbReference>
<dbReference type="HOGENOM" id="CLU_027074_11_3_1"/>
<dbReference type="InParanoid" id="Q17QJ3"/>
<dbReference type="OrthoDB" id="2017893at2759"/>
<dbReference type="TreeFam" id="TF105128"/>
<dbReference type="Proteomes" id="UP000009136">
    <property type="component" value="Chromosome 27"/>
</dbReference>
<dbReference type="Bgee" id="ENSBTAG00000016413">
    <property type="expression patterns" value="Expressed in tongue muscle and 89 other cell types or tissues"/>
</dbReference>
<dbReference type="GO" id="GO:0005737">
    <property type="term" value="C:cytoplasm"/>
    <property type="evidence" value="ECO:0000318"/>
    <property type="project" value="GO_Central"/>
</dbReference>
<dbReference type="GO" id="GO:0005794">
    <property type="term" value="C:Golgi apparatus"/>
    <property type="evidence" value="ECO:0007669"/>
    <property type="project" value="UniProtKB-SubCell"/>
</dbReference>
<dbReference type="GO" id="GO:0005634">
    <property type="term" value="C:nucleus"/>
    <property type="evidence" value="ECO:0007669"/>
    <property type="project" value="UniProtKB-SubCell"/>
</dbReference>
<dbReference type="GO" id="GO:0033549">
    <property type="term" value="F:MAP kinase phosphatase activity"/>
    <property type="evidence" value="ECO:0000318"/>
    <property type="project" value="GO_Central"/>
</dbReference>
<dbReference type="GO" id="GO:0004722">
    <property type="term" value="F:protein serine/threonine phosphatase activity"/>
    <property type="evidence" value="ECO:0007669"/>
    <property type="project" value="UniProtKB-EC"/>
</dbReference>
<dbReference type="GO" id="GO:0004725">
    <property type="term" value="F:protein tyrosine phosphatase activity"/>
    <property type="evidence" value="ECO:0007669"/>
    <property type="project" value="UniProtKB-EC"/>
</dbReference>
<dbReference type="GO" id="GO:0008138">
    <property type="term" value="F:protein tyrosine/serine/threonine phosphatase activity"/>
    <property type="evidence" value="ECO:0000318"/>
    <property type="project" value="GO_Central"/>
</dbReference>
<dbReference type="GO" id="GO:0043409">
    <property type="term" value="P:negative regulation of MAPK cascade"/>
    <property type="evidence" value="ECO:0000318"/>
    <property type="project" value="GO_Central"/>
</dbReference>
<dbReference type="CDD" id="cd14578">
    <property type="entry name" value="DUSP26"/>
    <property type="match status" value="1"/>
</dbReference>
<dbReference type="FunFam" id="3.90.190.10:FF:000037">
    <property type="entry name" value="dual specificity protein phosphatase 26"/>
    <property type="match status" value="1"/>
</dbReference>
<dbReference type="Gene3D" id="3.90.190.10">
    <property type="entry name" value="Protein tyrosine phosphatase superfamily"/>
    <property type="match status" value="1"/>
</dbReference>
<dbReference type="InterPro" id="IPR020405">
    <property type="entry name" value="Atypical_DUSP_subfamA"/>
</dbReference>
<dbReference type="InterPro" id="IPR000340">
    <property type="entry name" value="Dual-sp_phosphatase_cat-dom"/>
</dbReference>
<dbReference type="InterPro" id="IPR029021">
    <property type="entry name" value="Prot-tyrosine_phosphatase-like"/>
</dbReference>
<dbReference type="InterPro" id="IPR016130">
    <property type="entry name" value="Tyr_Pase_AS"/>
</dbReference>
<dbReference type="InterPro" id="IPR000387">
    <property type="entry name" value="Tyr_Pase_dom"/>
</dbReference>
<dbReference type="InterPro" id="IPR020422">
    <property type="entry name" value="TYR_PHOSPHATASE_DUAL_dom"/>
</dbReference>
<dbReference type="PANTHER" id="PTHR45682">
    <property type="entry name" value="AGAP008228-PA"/>
    <property type="match status" value="1"/>
</dbReference>
<dbReference type="PANTHER" id="PTHR45682:SF8">
    <property type="entry name" value="DUAL SPECIFICITY PROTEIN PHOSPHATASE 26"/>
    <property type="match status" value="1"/>
</dbReference>
<dbReference type="Pfam" id="PF00782">
    <property type="entry name" value="DSPc"/>
    <property type="match status" value="1"/>
</dbReference>
<dbReference type="PRINTS" id="PR01908">
    <property type="entry name" value="ADSPHPHTASE"/>
</dbReference>
<dbReference type="PRINTS" id="PR01909">
    <property type="entry name" value="ADSPHPHTASEA"/>
</dbReference>
<dbReference type="SMART" id="SM00195">
    <property type="entry name" value="DSPc"/>
    <property type="match status" value="1"/>
</dbReference>
<dbReference type="SUPFAM" id="SSF52799">
    <property type="entry name" value="(Phosphotyrosine protein) phosphatases II"/>
    <property type="match status" value="1"/>
</dbReference>
<dbReference type="PROSITE" id="PS00383">
    <property type="entry name" value="TYR_PHOSPHATASE_1"/>
    <property type="match status" value="1"/>
</dbReference>
<dbReference type="PROSITE" id="PS50056">
    <property type="entry name" value="TYR_PHOSPHATASE_2"/>
    <property type="match status" value="1"/>
</dbReference>
<dbReference type="PROSITE" id="PS50054">
    <property type="entry name" value="TYR_PHOSPHATASE_DUAL"/>
    <property type="match status" value="1"/>
</dbReference>
<evidence type="ECO:0000250" key="1"/>
<evidence type="ECO:0000255" key="2">
    <source>
        <dbReference type="PROSITE-ProRule" id="PRU00160"/>
    </source>
</evidence>
<evidence type="ECO:0000255" key="3">
    <source>
        <dbReference type="PROSITE-ProRule" id="PRU10044"/>
    </source>
</evidence>
<evidence type="ECO:0000305" key="4"/>
<keyword id="KW-0963">Cytoplasm</keyword>
<keyword id="KW-0333">Golgi apparatus</keyword>
<keyword id="KW-0378">Hydrolase</keyword>
<keyword id="KW-0539">Nucleus</keyword>
<keyword id="KW-0904">Protein phosphatase</keyword>
<keyword id="KW-1185">Reference proteome</keyword>
<accession>Q17QJ3</accession>
<organism>
    <name type="scientific">Bos taurus</name>
    <name type="common">Bovine</name>
    <dbReference type="NCBI Taxonomy" id="9913"/>
    <lineage>
        <taxon>Eukaryota</taxon>
        <taxon>Metazoa</taxon>
        <taxon>Chordata</taxon>
        <taxon>Craniata</taxon>
        <taxon>Vertebrata</taxon>
        <taxon>Euteleostomi</taxon>
        <taxon>Mammalia</taxon>
        <taxon>Eutheria</taxon>
        <taxon>Laurasiatheria</taxon>
        <taxon>Artiodactyla</taxon>
        <taxon>Ruminantia</taxon>
        <taxon>Pecora</taxon>
        <taxon>Bovidae</taxon>
        <taxon>Bovinae</taxon>
        <taxon>Bos</taxon>
    </lineage>
</organism>